<keyword id="KW-0325">Glycoprotein</keyword>
<keyword id="KW-0472">Membrane</keyword>
<keyword id="KW-1267">Proteomics identification</keyword>
<keyword id="KW-1185">Reference proteome</keyword>
<keyword id="KW-0812">Transmembrane</keyword>
<keyword id="KW-1133">Transmembrane helix</keyword>
<gene>
    <name type="primary">TSPAN31</name>
    <name type="synonym">SAS</name>
</gene>
<dbReference type="EMBL" id="U01160">
    <property type="protein sequence ID" value="AAA17782.1"/>
    <property type="molecule type" value="mRNA"/>
</dbReference>
<dbReference type="EMBL" id="U81031">
    <property type="protein sequence ID" value="AAC39524.2"/>
    <property type="molecule type" value="Genomic_DNA"/>
</dbReference>
<dbReference type="EMBL" id="AK315765">
    <property type="protein sequence ID" value="BAG38117.1"/>
    <property type="molecule type" value="mRNA"/>
</dbReference>
<dbReference type="EMBL" id="CR407647">
    <property type="protein sequence ID" value="CAG28575.1"/>
    <property type="molecule type" value="mRNA"/>
</dbReference>
<dbReference type="EMBL" id="CH471054">
    <property type="protein sequence ID" value="EAW97057.1"/>
    <property type="molecule type" value="Genomic_DNA"/>
</dbReference>
<dbReference type="EMBL" id="BC010377">
    <property type="protein sequence ID" value="AAH10377.1"/>
    <property type="molecule type" value="mRNA"/>
</dbReference>
<dbReference type="CCDS" id="CCDS8952.1"/>
<dbReference type="PIR" id="I58391">
    <property type="entry name" value="I58391"/>
</dbReference>
<dbReference type="RefSeq" id="NP_001317097.1">
    <property type="nucleotide sequence ID" value="NM_001330168.1"/>
</dbReference>
<dbReference type="RefSeq" id="NP_001317098.1">
    <property type="nucleotide sequence ID" value="NM_001330169.1"/>
</dbReference>
<dbReference type="RefSeq" id="NP_005972.1">
    <property type="nucleotide sequence ID" value="NM_005981.5"/>
</dbReference>
<dbReference type="SMR" id="Q12999"/>
<dbReference type="BioGRID" id="112209">
    <property type="interactions" value="60"/>
</dbReference>
<dbReference type="FunCoup" id="Q12999">
    <property type="interactions" value="925"/>
</dbReference>
<dbReference type="IntAct" id="Q12999">
    <property type="interactions" value="50"/>
</dbReference>
<dbReference type="STRING" id="9606.ENSP00000257910"/>
<dbReference type="GlyCosmos" id="Q12999">
    <property type="glycosylation" value="4 sites, No reported glycans"/>
</dbReference>
<dbReference type="GlyGen" id="Q12999">
    <property type="glycosylation" value="4 sites"/>
</dbReference>
<dbReference type="iPTMnet" id="Q12999"/>
<dbReference type="PhosphoSitePlus" id="Q12999"/>
<dbReference type="SwissPalm" id="Q12999"/>
<dbReference type="BioMuta" id="TSPAN31"/>
<dbReference type="DMDM" id="6174973"/>
<dbReference type="jPOST" id="Q12999"/>
<dbReference type="MassIVE" id="Q12999"/>
<dbReference type="PaxDb" id="9606-ENSP00000257910"/>
<dbReference type="PeptideAtlas" id="Q12999"/>
<dbReference type="ProteomicsDB" id="59088"/>
<dbReference type="Pumba" id="Q12999"/>
<dbReference type="Antibodypedia" id="28904">
    <property type="antibodies" value="130 antibodies from 26 providers"/>
</dbReference>
<dbReference type="DNASU" id="6302"/>
<dbReference type="Ensembl" id="ENST00000257910.8">
    <property type="protein sequence ID" value="ENSP00000257910.3"/>
    <property type="gene ID" value="ENSG00000135452.10"/>
</dbReference>
<dbReference type="GeneID" id="6302"/>
<dbReference type="KEGG" id="hsa:6302"/>
<dbReference type="MANE-Select" id="ENST00000257910.8">
    <property type="protein sequence ID" value="ENSP00000257910.3"/>
    <property type="RefSeq nucleotide sequence ID" value="NM_005981.5"/>
    <property type="RefSeq protein sequence ID" value="NP_005972.1"/>
</dbReference>
<dbReference type="UCSC" id="uc001spt.4">
    <property type="organism name" value="human"/>
</dbReference>
<dbReference type="AGR" id="HGNC:10539"/>
<dbReference type="CTD" id="6302"/>
<dbReference type="DisGeNET" id="6302"/>
<dbReference type="GeneCards" id="TSPAN31"/>
<dbReference type="HGNC" id="HGNC:10539">
    <property type="gene designation" value="TSPAN31"/>
</dbReference>
<dbReference type="HPA" id="ENSG00000135452">
    <property type="expression patterns" value="Low tissue specificity"/>
</dbReference>
<dbReference type="MalaCards" id="TSPAN31"/>
<dbReference type="MIM" id="181035">
    <property type="type" value="gene"/>
</dbReference>
<dbReference type="neXtProt" id="NX_Q12999"/>
<dbReference type="OpenTargets" id="ENSG00000135452"/>
<dbReference type="PharmGKB" id="PA34949"/>
<dbReference type="VEuPathDB" id="HostDB:ENSG00000135452"/>
<dbReference type="eggNOG" id="KOG3882">
    <property type="taxonomic scope" value="Eukaryota"/>
</dbReference>
<dbReference type="GeneTree" id="ENSGT00940000160351"/>
<dbReference type="HOGENOM" id="CLU_088363_0_0_1"/>
<dbReference type="InParanoid" id="Q12999"/>
<dbReference type="OMA" id="AWGIMEN"/>
<dbReference type="OrthoDB" id="5845060at2759"/>
<dbReference type="PAN-GO" id="Q12999">
    <property type="GO annotations" value="1 GO annotation based on evolutionary models"/>
</dbReference>
<dbReference type="PhylomeDB" id="Q12999"/>
<dbReference type="TreeFam" id="TF323367"/>
<dbReference type="PathwayCommons" id="Q12999"/>
<dbReference type="SignaLink" id="Q12999"/>
<dbReference type="BioGRID-ORCS" id="6302">
    <property type="hits" value="37 hits in 1157 CRISPR screens"/>
</dbReference>
<dbReference type="ChiTaRS" id="TSPAN31">
    <property type="organism name" value="human"/>
</dbReference>
<dbReference type="GeneWiki" id="TSPAN31"/>
<dbReference type="GenomeRNAi" id="6302"/>
<dbReference type="Pharos" id="Q12999">
    <property type="development level" value="Tbio"/>
</dbReference>
<dbReference type="PRO" id="PR:Q12999"/>
<dbReference type="Proteomes" id="UP000005640">
    <property type="component" value="Chromosome 12"/>
</dbReference>
<dbReference type="RNAct" id="Q12999">
    <property type="molecule type" value="protein"/>
</dbReference>
<dbReference type="Bgee" id="ENSG00000135452">
    <property type="expression patterns" value="Expressed in pancreatic ductal cell and 207 other cell types or tissues"/>
</dbReference>
<dbReference type="ExpressionAtlas" id="Q12999">
    <property type="expression patterns" value="baseline and differential"/>
</dbReference>
<dbReference type="GO" id="GO:0016020">
    <property type="term" value="C:membrane"/>
    <property type="evidence" value="ECO:0000304"/>
    <property type="project" value="ProtInc"/>
</dbReference>
<dbReference type="GO" id="GO:0005886">
    <property type="term" value="C:plasma membrane"/>
    <property type="evidence" value="ECO:0000304"/>
    <property type="project" value="ProtInc"/>
</dbReference>
<dbReference type="GO" id="GO:0008284">
    <property type="term" value="P:positive regulation of cell population proliferation"/>
    <property type="evidence" value="ECO:0000304"/>
    <property type="project" value="ProtInc"/>
</dbReference>
<dbReference type="InterPro" id="IPR018499">
    <property type="entry name" value="Tetraspanin/Peripherin"/>
</dbReference>
<dbReference type="InterPro" id="IPR000301">
    <property type="entry name" value="Tetraspanin_animals"/>
</dbReference>
<dbReference type="PANTHER" id="PTHR19282">
    <property type="entry name" value="TETRASPANIN"/>
    <property type="match status" value="1"/>
</dbReference>
<dbReference type="PANTHER" id="PTHR19282:SF3">
    <property type="entry name" value="TETRASPANIN-31"/>
    <property type="match status" value="1"/>
</dbReference>
<dbReference type="Pfam" id="PF00335">
    <property type="entry name" value="Tetraspanin"/>
    <property type="match status" value="1"/>
</dbReference>
<dbReference type="PIRSF" id="PIRSF002419">
    <property type="entry name" value="Tetraspanin"/>
    <property type="match status" value="1"/>
</dbReference>
<dbReference type="PRINTS" id="PR00259">
    <property type="entry name" value="TMFOUR"/>
</dbReference>
<sequence length="210" mass="23053">MVCGGFACSKNALCALNVVYMLVSLLLIGVAAWGKGLGLVSSIHIIGGVIAVGVFLLLIAVAGLVGAVNHHQVLLFFYMIILGLVFIFQFVISCSCLAINRSKQTDVINASWWVMSNKTRDELERSFDCCGLFNLTTLYQQDYDFCTAICKSQSPTCQMCGEKFLKHSDEALKILGGVGLFFSFTEILGVWLAMRFRNQKDPRANPSAFL</sequence>
<accession>Q12999</accession>
<accession>O00577</accession>
<accession>Q53X76</accession>
<evidence type="ECO:0000255" key="1"/>
<evidence type="ECO:0000305" key="2"/>
<protein>
    <recommendedName>
        <fullName>Tetraspanin-31</fullName>
        <shortName>Tspan-31</shortName>
    </recommendedName>
    <alternativeName>
        <fullName>Sarcoma-amplified sequence</fullName>
    </alternativeName>
</protein>
<comment type="interaction">
    <interactant intactId="EBI-17678331">
        <id>Q12999</id>
    </interactant>
    <interactant intactId="EBI-3922513">
        <id>O95393</id>
        <label>BMP10</label>
    </interactant>
    <organismsDiffer>false</organismsDiffer>
    <experiments>3</experiments>
</comment>
<comment type="interaction">
    <interactant intactId="EBI-17678331">
        <id>Q12999</id>
    </interactant>
    <interactant intactId="EBI-11522780">
        <id>Q96DZ9-2</id>
        <label>CMTM5</label>
    </interactant>
    <organismsDiffer>false</organismsDiffer>
    <experiments>3</experiments>
</comment>
<comment type="interaction">
    <interactant intactId="EBI-17678331">
        <id>Q12999</id>
    </interactant>
    <interactant intactId="EBI-1752413">
        <id>P78329</id>
        <label>CYP4F2</label>
    </interactant>
    <organismsDiffer>false</organismsDiffer>
    <experiments>3</experiments>
</comment>
<comment type="interaction">
    <interactant intactId="EBI-17678331">
        <id>Q12999</id>
    </interactant>
    <interactant intactId="EBI-2863634">
        <id>Q9UHE5</id>
        <label>NAT8</label>
    </interactant>
    <organismsDiffer>false</organismsDiffer>
    <experiments>3</experiments>
</comment>
<comment type="interaction">
    <interactant intactId="EBI-17678331">
        <id>Q12999</id>
    </interactant>
    <interactant intactId="EBI-8644112">
        <id>Q9BRI3</id>
        <label>SLC30A2</label>
    </interactant>
    <organismsDiffer>false</organismsDiffer>
    <experiments>3</experiments>
</comment>
<comment type="interaction">
    <interactant intactId="EBI-17678331">
        <id>Q12999</id>
    </interactant>
    <interactant intactId="EBI-3914288">
        <id>O60636</id>
        <label>TSPAN2</label>
    </interactant>
    <organismsDiffer>false</organismsDiffer>
    <experiments>3</experiments>
</comment>
<comment type="subcellular location">
    <subcellularLocation>
        <location>Membrane</location>
        <topology>Multi-pass membrane protein</topology>
    </subcellularLocation>
</comment>
<comment type="similarity">
    <text evidence="2">Belongs to the tetraspanin (TM4SF) family.</text>
</comment>
<name>TSN31_HUMAN</name>
<organism>
    <name type="scientific">Homo sapiens</name>
    <name type="common">Human</name>
    <dbReference type="NCBI Taxonomy" id="9606"/>
    <lineage>
        <taxon>Eukaryota</taxon>
        <taxon>Metazoa</taxon>
        <taxon>Chordata</taxon>
        <taxon>Craniata</taxon>
        <taxon>Vertebrata</taxon>
        <taxon>Euteleostomi</taxon>
        <taxon>Mammalia</taxon>
        <taxon>Eutheria</taxon>
        <taxon>Euarchontoglires</taxon>
        <taxon>Primates</taxon>
        <taxon>Haplorrhini</taxon>
        <taxon>Catarrhini</taxon>
        <taxon>Hominidae</taxon>
        <taxon>Homo</taxon>
    </lineage>
</organism>
<reference key="1">
    <citation type="journal article" date="1994" name="Oncogene">
        <title>SAS, a gene amplified in human sarcomas, encodes a new member of the transmembrane 4 superfamily of proteins.</title>
        <authorList>
            <person name="Jankowski S.A."/>
            <person name="Mitchell D.S."/>
            <person name="Smith S.H."/>
            <person name="Trent J.M."/>
            <person name="Meltzer P.S."/>
        </authorList>
    </citation>
    <scope>NUCLEOTIDE SEQUENCE [MRNA]</scope>
    <source>
        <tissue>Osteosarcoma</tissue>
    </source>
</reference>
<reference key="2">
    <citation type="journal article" date="1997" name="Genomics">
        <title>Transcript mapping in a 46-kb sequenced region at the core of 12q13.3 amplification in human cancers.</title>
        <authorList>
            <person name="Elkahloun A.G."/>
            <person name="Krizman D.B."/>
            <person name="Wang Z."/>
            <person name="Hofmann T.A."/>
            <person name="Roe B.A."/>
            <person name="Meltzer P.S."/>
        </authorList>
    </citation>
    <scope>NUCLEOTIDE SEQUENCE [MRNA]</scope>
</reference>
<reference key="3">
    <citation type="submission" date="2001-12" db="EMBL/GenBank/DDBJ databases">
        <authorList>
            <person name="Roe B.A."/>
        </authorList>
    </citation>
    <scope>SEQUENCE REVISION TO 76-77 AND 205-210</scope>
</reference>
<reference key="4">
    <citation type="journal article" date="2004" name="Nat. Genet.">
        <title>Complete sequencing and characterization of 21,243 full-length human cDNAs.</title>
        <authorList>
            <person name="Ota T."/>
            <person name="Suzuki Y."/>
            <person name="Nishikawa T."/>
            <person name="Otsuki T."/>
            <person name="Sugiyama T."/>
            <person name="Irie R."/>
            <person name="Wakamatsu A."/>
            <person name="Hayashi K."/>
            <person name="Sato H."/>
            <person name="Nagai K."/>
            <person name="Kimura K."/>
            <person name="Makita H."/>
            <person name="Sekine M."/>
            <person name="Obayashi M."/>
            <person name="Nishi T."/>
            <person name="Shibahara T."/>
            <person name="Tanaka T."/>
            <person name="Ishii S."/>
            <person name="Yamamoto J."/>
            <person name="Saito K."/>
            <person name="Kawai Y."/>
            <person name="Isono Y."/>
            <person name="Nakamura Y."/>
            <person name="Nagahari K."/>
            <person name="Murakami K."/>
            <person name="Yasuda T."/>
            <person name="Iwayanagi T."/>
            <person name="Wagatsuma M."/>
            <person name="Shiratori A."/>
            <person name="Sudo H."/>
            <person name="Hosoiri T."/>
            <person name="Kaku Y."/>
            <person name="Kodaira H."/>
            <person name="Kondo H."/>
            <person name="Sugawara M."/>
            <person name="Takahashi M."/>
            <person name="Kanda K."/>
            <person name="Yokoi T."/>
            <person name="Furuya T."/>
            <person name="Kikkawa E."/>
            <person name="Omura Y."/>
            <person name="Abe K."/>
            <person name="Kamihara K."/>
            <person name="Katsuta N."/>
            <person name="Sato K."/>
            <person name="Tanikawa M."/>
            <person name="Yamazaki M."/>
            <person name="Ninomiya K."/>
            <person name="Ishibashi T."/>
            <person name="Yamashita H."/>
            <person name="Murakawa K."/>
            <person name="Fujimori K."/>
            <person name="Tanai H."/>
            <person name="Kimata M."/>
            <person name="Watanabe M."/>
            <person name="Hiraoka S."/>
            <person name="Chiba Y."/>
            <person name="Ishida S."/>
            <person name="Ono Y."/>
            <person name="Takiguchi S."/>
            <person name="Watanabe S."/>
            <person name="Yosida M."/>
            <person name="Hotuta T."/>
            <person name="Kusano J."/>
            <person name="Kanehori K."/>
            <person name="Takahashi-Fujii A."/>
            <person name="Hara H."/>
            <person name="Tanase T.-O."/>
            <person name="Nomura Y."/>
            <person name="Togiya S."/>
            <person name="Komai F."/>
            <person name="Hara R."/>
            <person name="Takeuchi K."/>
            <person name="Arita M."/>
            <person name="Imose N."/>
            <person name="Musashino K."/>
            <person name="Yuuki H."/>
            <person name="Oshima A."/>
            <person name="Sasaki N."/>
            <person name="Aotsuka S."/>
            <person name="Yoshikawa Y."/>
            <person name="Matsunawa H."/>
            <person name="Ichihara T."/>
            <person name="Shiohata N."/>
            <person name="Sano S."/>
            <person name="Moriya S."/>
            <person name="Momiyama H."/>
            <person name="Satoh N."/>
            <person name="Takami S."/>
            <person name="Terashima Y."/>
            <person name="Suzuki O."/>
            <person name="Nakagawa S."/>
            <person name="Senoh A."/>
            <person name="Mizoguchi H."/>
            <person name="Goto Y."/>
            <person name="Shimizu F."/>
            <person name="Wakebe H."/>
            <person name="Hishigaki H."/>
            <person name="Watanabe T."/>
            <person name="Sugiyama A."/>
            <person name="Takemoto M."/>
            <person name="Kawakami B."/>
            <person name="Yamazaki M."/>
            <person name="Watanabe K."/>
            <person name="Kumagai A."/>
            <person name="Itakura S."/>
            <person name="Fukuzumi Y."/>
            <person name="Fujimori Y."/>
            <person name="Komiyama M."/>
            <person name="Tashiro H."/>
            <person name="Tanigami A."/>
            <person name="Fujiwara T."/>
            <person name="Ono T."/>
            <person name="Yamada K."/>
            <person name="Fujii Y."/>
            <person name="Ozaki K."/>
            <person name="Hirao M."/>
            <person name="Ohmori Y."/>
            <person name="Kawabata A."/>
            <person name="Hikiji T."/>
            <person name="Kobatake N."/>
            <person name="Inagaki H."/>
            <person name="Ikema Y."/>
            <person name="Okamoto S."/>
            <person name="Okitani R."/>
            <person name="Kawakami T."/>
            <person name="Noguchi S."/>
            <person name="Itoh T."/>
            <person name="Shigeta K."/>
            <person name="Senba T."/>
            <person name="Matsumura K."/>
            <person name="Nakajima Y."/>
            <person name="Mizuno T."/>
            <person name="Morinaga M."/>
            <person name="Sasaki M."/>
            <person name="Togashi T."/>
            <person name="Oyama M."/>
            <person name="Hata H."/>
            <person name="Watanabe M."/>
            <person name="Komatsu T."/>
            <person name="Mizushima-Sugano J."/>
            <person name="Satoh T."/>
            <person name="Shirai Y."/>
            <person name="Takahashi Y."/>
            <person name="Nakagawa K."/>
            <person name="Okumura K."/>
            <person name="Nagase T."/>
            <person name="Nomura N."/>
            <person name="Kikuchi H."/>
            <person name="Masuho Y."/>
            <person name="Yamashita R."/>
            <person name="Nakai K."/>
            <person name="Yada T."/>
            <person name="Nakamura Y."/>
            <person name="Ohara O."/>
            <person name="Isogai T."/>
            <person name="Sugano S."/>
        </authorList>
    </citation>
    <scope>NUCLEOTIDE SEQUENCE [LARGE SCALE MRNA]</scope>
    <source>
        <tissue>Trachea</tissue>
    </source>
</reference>
<reference key="5">
    <citation type="submission" date="2004-05" db="EMBL/GenBank/DDBJ databases">
        <title>Cloning of human full open reading frames in Gateway(TM) system entry vector (pDONR201).</title>
        <authorList>
            <person name="Ebert L."/>
            <person name="Schick M."/>
            <person name="Neubert P."/>
            <person name="Schatten R."/>
            <person name="Henze S."/>
            <person name="Korn B."/>
        </authorList>
    </citation>
    <scope>NUCLEOTIDE SEQUENCE [LARGE SCALE MRNA]</scope>
</reference>
<reference key="6">
    <citation type="submission" date="2005-07" db="EMBL/GenBank/DDBJ databases">
        <authorList>
            <person name="Mural R.J."/>
            <person name="Istrail S."/>
            <person name="Sutton G."/>
            <person name="Florea L."/>
            <person name="Halpern A.L."/>
            <person name="Mobarry C.M."/>
            <person name="Lippert R."/>
            <person name="Walenz B."/>
            <person name="Shatkay H."/>
            <person name="Dew I."/>
            <person name="Miller J.R."/>
            <person name="Flanigan M.J."/>
            <person name="Edwards N.J."/>
            <person name="Bolanos R."/>
            <person name="Fasulo D."/>
            <person name="Halldorsson B.V."/>
            <person name="Hannenhalli S."/>
            <person name="Turner R."/>
            <person name="Yooseph S."/>
            <person name="Lu F."/>
            <person name="Nusskern D.R."/>
            <person name="Shue B.C."/>
            <person name="Zheng X.H."/>
            <person name="Zhong F."/>
            <person name="Delcher A.L."/>
            <person name="Huson D.H."/>
            <person name="Kravitz S.A."/>
            <person name="Mouchard L."/>
            <person name="Reinert K."/>
            <person name="Remington K.A."/>
            <person name="Clark A.G."/>
            <person name="Waterman M.S."/>
            <person name="Eichler E.E."/>
            <person name="Adams M.D."/>
            <person name="Hunkapiller M.W."/>
            <person name="Myers E.W."/>
            <person name="Venter J.C."/>
        </authorList>
    </citation>
    <scope>NUCLEOTIDE SEQUENCE [LARGE SCALE GENOMIC DNA]</scope>
</reference>
<reference key="7">
    <citation type="journal article" date="2004" name="Genome Res.">
        <title>The status, quality, and expansion of the NIH full-length cDNA project: the Mammalian Gene Collection (MGC).</title>
        <authorList>
            <consortium name="The MGC Project Team"/>
        </authorList>
    </citation>
    <scope>NUCLEOTIDE SEQUENCE [LARGE SCALE MRNA]</scope>
    <source>
        <tissue>Prostate</tissue>
    </source>
</reference>
<proteinExistence type="evidence at protein level"/>
<feature type="chain" id="PRO_0000219270" description="Tetraspanin-31">
    <location>
        <begin position="1"/>
        <end position="210"/>
    </location>
</feature>
<feature type="topological domain" description="Cytoplasmic" evidence="1">
    <location>
        <begin position="1"/>
        <end position="12"/>
    </location>
</feature>
<feature type="transmembrane region" description="Helical" evidence="1">
    <location>
        <begin position="13"/>
        <end position="33"/>
    </location>
</feature>
<feature type="topological domain" description="Extracellular" evidence="1">
    <location>
        <begin position="34"/>
        <end position="44"/>
    </location>
</feature>
<feature type="transmembrane region" description="Helical" evidence="1">
    <location>
        <begin position="45"/>
        <end position="65"/>
    </location>
</feature>
<feature type="topological domain" description="Cytoplasmic" evidence="1">
    <location>
        <begin position="66"/>
        <end position="72"/>
    </location>
</feature>
<feature type="transmembrane region" description="Helical" evidence="1">
    <location>
        <begin position="73"/>
        <end position="93"/>
    </location>
</feature>
<feature type="topological domain" description="Extracellular" evidence="1">
    <location>
        <begin position="94"/>
        <end position="173"/>
    </location>
</feature>
<feature type="transmembrane region" description="Helical" evidence="1">
    <location>
        <begin position="174"/>
        <end position="194"/>
    </location>
</feature>
<feature type="topological domain" description="Cytoplasmic" evidence="1">
    <location>
        <begin position="195"/>
        <end position="210"/>
    </location>
</feature>
<feature type="glycosylation site" description="N-linked (GlcNAc...) asparagine" evidence="1">
    <location>
        <position position="100"/>
    </location>
</feature>
<feature type="glycosylation site" description="N-linked (GlcNAc...) asparagine" evidence="1">
    <location>
        <position position="109"/>
    </location>
</feature>
<feature type="glycosylation site" description="N-linked (GlcNAc...) asparagine" evidence="1">
    <location>
        <position position="117"/>
    </location>
</feature>
<feature type="glycosylation site" description="N-linked (GlcNAc...) asparagine" evidence="1">
    <location>
        <position position="134"/>
    </location>
</feature>